<evidence type="ECO:0000255" key="1">
    <source>
        <dbReference type="HAMAP-Rule" id="MF_01574"/>
    </source>
</evidence>
<name>LACG_STAA1</name>
<gene>
    <name evidence="1" type="primary">lacG</name>
    <name type="ordered locus">SAHV_2173</name>
</gene>
<protein>
    <recommendedName>
        <fullName evidence="1">6-phospho-beta-galactosidase</fullName>
        <ecNumber evidence="1">3.2.1.85</ecNumber>
    </recommendedName>
    <alternativeName>
        <fullName evidence="1">Beta-D-phosphogalactoside galactohydrolase</fullName>
        <shortName evidence="1">PGALase</shortName>
    </alternativeName>
    <alternativeName>
        <fullName evidence="1">P-beta-Gal</fullName>
        <shortName evidence="1">PBG</shortName>
    </alternativeName>
</protein>
<reference key="1">
    <citation type="journal article" date="2008" name="Antimicrob. Agents Chemother.">
        <title>Mutated response regulator graR is responsible for phenotypic conversion of Staphylococcus aureus from heterogeneous vancomycin-intermediate resistance to vancomycin-intermediate resistance.</title>
        <authorList>
            <person name="Neoh H.-M."/>
            <person name="Cui L."/>
            <person name="Yuzawa H."/>
            <person name="Takeuchi F."/>
            <person name="Matsuo M."/>
            <person name="Hiramatsu K."/>
        </authorList>
    </citation>
    <scope>NUCLEOTIDE SEQUENCE [LARGE SCALE GENOMIC DNA]</scope>
    <source>
        <strain>Mu3 / ATCC 700698</strain>
    </source>
</reference>
<keyword id="KW-0326">Glycosidase</keyword>
<keyword id="KW-0378">Hydrolase</keyword>
<feature type="chain" id="PRO_1000069207" description="6-phospho-beta-galactosidase">
    <location>
        <begin position="1"/>
        <end position="470"/>
    </location>
</feature>
<feature type="active site" description="Proton donor" evidence="1">
    <location>
        <position position="160"/>
    </location>
</feature>
<feature type="active site" description="Nucleophile" evidence="1">
    <location>
        <position position="375"/>
    </location>
</feature>
<feature type="binding site" evidence="1">
    <location>
        <position position="19"/>
    </location>
    <ligand>
        <name>D-galactose 6-phosphate</name>
        <dbReference type="ChEBI" id="CHEBI:91004"/>
    </ligand>
</feature>
<feature type="binding site" evidence="1">
    <location>
        <position position="116"/>
    </location>
    <ligand>
        <name>D-galactose 6-phosphate</name>
        <dbReference type="ChEBI" id="CHEBI:91004"/>
    </ligand>
</feature>
<feature type="binding site" evidence="1">
    <location>
        <position position="159"/>
    </location>
    <ligand>
        <name>D-galactose 6-phosphate</name>
        <dbReference type="ChEBI" id="CHEBI:91004"/>
    </ligand>
</feature>
<feature type="binding site" evidence="1">
    <location>
        <position position="160"/>
    </location>
    <ligand>
        <name>D-galactose 6-phosphate</name>
        <dbReference type="ChEBI" id="CHEBI:91004"/>
    </ligand>
</feature>
<feature type="binding site" evidence="1">
    <location>
        <position position="297"/>
    </location>
    <ligand>
        <name>D-galactose 6-phosphate</name>
        <dbReference type="ChEBI" id="CHEBI:91004"/>
    </ligand>
</feature>
<feature type="binding site" evidence="1">
    <location>
        <position position="430"/>
    </location>
    <ligand>
        <name>D-galactose 6-phosphate</name>
        <dbReference type="ChEBI" id="CHEBI:91004"/>
    </ligand>
</feature>
<feature type="binding site" evidence="1">
    <location>
        <position position="431"/>
    </location>
    <ligand>
        <name>D-galactose 6-phosphate</name>
        <dbReference type="ChEBI" id="CHEBI:91004"/>
    </ligand>
</feature>
<feature type="binding site" evidence="1">
    <location>
        <position position="437"/>
    </location>
    <ligand>
        <name>D-galactose 6-phosphate</name>
        <dbReference type="ChEBI" id="CHEBI:91004"/>
    </ligand>
</feature>
<feature type="binding site" evidence="1">
    <location>
        <position position="439"/>
    </location>
    <ligand>
        <name>D-galactose 6-phosphate</name>
        <dbReference type="ChEBI" id="CHEBI:91004"/>
    </ligand>
</feature>
<accession>A7X569</accession>
<proteinExistence type="inferred from homology"/>
<comment type="catalytic activity">
    <reaction evidence="1">
        <text>a 6-phospho-beta-D-galactoside + H2O = D-galactose 6-phosphate + an alcohol</text>
        <dbReference type="Rhea" id="RHEA:24568"/>
        <dbReference type="ChEBI" id="CHEBI:15377"/>
        <dbReference type="ChEBI" id="CHEBI:30879"/>
        <dbReference type="ChEBI" id="CHEBI:58534"/>
        <dbReference type="ChEBI" id="CHEBI:91004"/>
        <dbReference type="EC" id="3.2.1.85"/>
    </reaction>
</comment>
<comment type="pathway">
    <text evidence="1">Carbohydrate metabolism; lactose degradation; D-galactose 6-phosphate and beta-D-glucose from lactose 6-phosphate: step 1/1.</text>
</comment>
<comment type="similarity">
    <text evidence="1">Belongs to the glycosyl hydrolase 1 family.</text>
</comment>
<organism>
    <name type="scientific">Staphylococcus aureus (strain Mu3 / ATCC 700698)</name>
    <dbReference type="NCBI Taxonomy" id="418127"/>
    <lineage>
        <taxon>Bacteria</taxon>
        <taxon>Bacillati</taxon>
        <taxon>Bacillota</taxon>
        <taxon>Bacilli</taxon>
        <taxon>Bacillales</taxon>
        <taxon>Staphylococcaceae</taxon>
        <taxon>Staphylococcus</taxon>
    </lineage>
</organism>
<dbReference type="EC" id="3.2.1.85" evidence="1"/>
<dbReference type="EMBL" id="AP009324">
    <property type="protein sequence ID" value="BAF79056.1"/>
    <property type="molecule type" value="Genomic_DNA"/>
</dbReference>
<dbReference type="RefSeq" id="WP_000169224.1">
    <property type="nucleotide sequence ID" value="NC_009782.1"/>
</dbReference>
<dbReference type="SMR" id="A7X569"/>
<dbReference type="CAZy" id="GH1">
    <property type="family name" value="Glycoside Hydrolase Family 1"/>
</dbReference>
<dbReference type="KEGG" id="saw:SAHV_2173"/>
<dbReference type="HOGENOM" id="CLU_001859_1_3_9"/>
<dbReference type="UniPathway" id="UPA00542">
    <property type="reaction ID" value="UER00605"/>
</dbReference>
<dbReference type="GO" id="GO:0005829">
    <property type="term" value="C:cytosol"/>
    <property type="evidence" value="ECO:0007669"/>
    <property type="project" value="TreeGrafter"/>
</dbReference>
<dbReference type="GO" id="GO:0033920">
    <property type="term" value="F:6-phospho-beta-galactosidase activity"/>
    <property type="evidence" value="ECO:0007669"/>
    <property type="project" value="UniProtKB-UniRule"/>
</dbReference>
<dbReference type="GO" id="GO:0008422">
    <property type="term" value="F:beta-glucosidase activity"/>
    <property type="evidence" value="ECO:0007669"/>
    <property type="project" value="TreeGrafter"/>
</dbReference>
<dbReference type="GO" id="GO:0019512">
    <property type="term" value="P:lactose catabolic process via tagatose-6-phosphate"/>
    <property type="evidence" value="ECO:0007669"/>
    <property type="project" value="InterPro"/>
</dbReference>
<dbReference type="FunFam" id="3.20.20.80:FF:000004">
    <property type="entry name" value="Beta-glucosidase 6-phospho-beta-glucosidase"/>
    <property type="match status" value="1"/>
</dbReference>
<dbReference type="Gene3D" id="3.20.20.80">
    <property type="entry name" value="Glycosidases"/>
    <property type="match status" value="1"/>
</dbReference>
<dbReference type="HAMAP" id="MF_01574">
    <property type="entry name" value="LacG"/>
    <property type="match status" value="1"/>
</dbReference>
<dbReference type="InterPro" id="IPR005928">
    <property type="entry name" value="6P-beta-galactosidase"/>
</dbReference>
<dbReference type="InterPro" id="IPR001360">
    <property type="entry name" value="Glyco_hydro_1"/>
</dbReference>
<dbReference type="InterPro" id="IPR018120">
    <property type="entry name" value="Glyco_hydro_1_AS"/>
</dbReference>
<dbReference type="InterPro" id="IPR033132">
    <property type="entry name" value="Glyco_hydro_1_N_CS"/>
</dbReference>
<dbReference type="InterPro" id="IPR017853">
    <property type="entry name" value="Glycoside_hydrolase_SF"/>
</dbReference>
<dbReference type="NCBIfam" id="TIGR01233">
    <property type="entry name" value="lacG"/>
    <property type="match status" value="1"/>
</dbReference>
<dbReference type="NCBIfam" id="NF010036">
    <property type="entry name" value="PRK13511.1"/>
    <property type="match status" value="1"/>
</dbReference>
<dbReference type="PANTHER" id="PTHR10353">
    <property type="entry name" value="GLYCOSYL HYDROLASE"/>
    <property type="match status" value="1"/>
</dbReference>
<dbReference type="PANTHER" id="PTHR10353:SF36">
    <property type="entry name" value="LP05116P"/>
    <property type="match status" value="1"/>
</dbReference>
<dbReference type="Pfam" id="PF00232">
    <property type="entry name" value="Glyco_hydro_1"/>
    <property type="match status" value="1"/>
</dbReference>
<dbReference type="PRINTS" id="PR00131">
    <property type="entry name" value="GLHYDRLASE1"/>
</dbReference>
<dbReference type="SUPFAM" id="SSF51445">
    <property type="entry name" value="(Trans)glycosidases"/>
    <property type="match status" value="1"/>
</dbReference>
<dbReference type="PROSITE" id="PS00572">
    <property type="entry name" value="GLYCOSYL_HYDROL_F1_1"/>
    <property type="match status" value="1"/>
</dbReference>
<dbReference type="PROSITE" id="PS00653">
    <property type="entry name" value="GLYCOSYL_HYDROL_F1_2"/>
    <property type="match status" value="1"/>
</dbReference>
<sequence>MTKTLPEDFIFGGATAAYQAEGATNTDGKGRVAWDTYLEENYWYTAEPASDFYNRYPVDLELSEKFGVNGIRISIAWSRIFPNGYGEVNPKGVEYYHKLFAECHKRHVEPFVTLHHFDTPEVLHKDGDFLNRKTIDYFVDYAEYCFKEFPEVKYWTTFNEIGPIGDGQYLVGKFPPGIKYDFEKVFQSHHNMMVAHARAVKLFKDGGYQGEIGVVHALPTKYPFDPSNPEDVRAAELEDIIHNKFILDATYLGKYSRETMEGVQHILSVNGGKLNITDEDYAILDAAKDLNDFLGINYYMSDWMRGYDGESEITHNATGDKGGSKYQLKGVGQREFDVDVPRTDWDWMIYPQGLYDQIMRVVKDYPNYHKIYITENGLGYKDEFIESEKTVHDDARIDYVRQHLNVIADAIKDGANVKGYFIWSLMDVFSWSNGYEKRYGLFYVDFETQERYPKKSAYWYKELAETKEIK</sequence>